<dbReference type="EMBL" id="AF431814">
    <property type="protein sequence ID" value="AAN61917.1"/>
    <property type="molecule type" value="Genomic_DNA"/>
</dbReference>
<dbReference type="EMBL" id="AE016819">
    <property type="protein sequence ID" value="AAS53226.1"/>
    <property type="molecule type" value="Genomic_DNA"/>
</dbReference>
<dbReference type="RefSeq" id="NP_985402.1">
    <property type="nucleotide sequence ID" value="NM_210756.1"/>
</dbReference>
<dbReference type="SMR" id="Q8J2M3"/>
<dbReference type="FunCoup" id="Q8J2M3">
    <property type="interactions" value="1676"/>
</dbReference>
<dbReference type="STRING" id="284811.Q8J2M3"/>
<dbReference type="EnsemblFungi" id="AAS53226">
    <property type="protein sequence ID" value="AAS53226"/>
    <property type="gene ID" value="AGOS_AFL148C"/>
</dbReference>
<dbReference type="GeneID" id="4621628"/>
<dbReference type="KEGG" id="ago:AGOS_AFL148C"/>
<dbReference type="eggNOG" id="KOG0019">
    <property type="taxonomic scope" value="Eukaryota"/>
</dbReference>
<dbReference type="HOGENOM" id="CLU_006684_1_3_1"/>
<dbReference type="InParanoid" id="Q8J2M3"/>
<dbReference type="OMA" id="MRRMKEM"/>
<dbReference type="OrthoDB" id="28737at2759"/>
<dbReference type="Proteomes" id="UP000000591">
    <property type="component" value="Chromosome VI"/>
</dbReference>
<dbReference type="GO" id="GO:0005829">
    <property type="term" value="C:cytosol"/>
    <property type="evidence" value="ECO:0000318"/>
    <property type="project" value="GO_Central"/>
</dbReference>
<dbReference type="GO" id="GO:0048471">
    <property type="term" value="C:perinuclear region of cytoplasm"/>
    <property type="evidence" value="ECO:0000318"/>
    <property type="project" value="GO_Central"/>
</dbReference>
<dbReference type="GO" id="GO:0005886">
    <property type="term" value="C:plasma membrane"/>
    <property type="evidence" value="ECO:0000318"/>
    <property type="project" value="GO_Central"/>
</dbReference>
<dbReference type="GO" id="GO:0032991">
    <property type="term" value="C:protein-containing complex"/>
    <property type="evidence" value="ECO:0000318"/>
    <property type="project" value="GO_Central"/>
</dbReference>
<dbReference type="GO" id="GO:0005524">
    <property type="term" value="F:ATP binding"/>
    <property type="evidence" value="ECO:0000318"/>
    <property type="project" value="GO_Central"/>
</dbReference>
<dbReference type="GO" id="GO:0016887">
    <property type="term" value="F:ATP hydrolysis activity"/>
    <property type="evidence" value="ECO:0000318"/>
    <property type="project" value="GO_Central"/>
</dbReference>
<dbReference type="GO" id="GO:0140662">
    <property type="term" value="F:ATP-dependent protein folding chaperone"/>
    <property type="evidence" value="ECO:0007669"/>
    <property type="project" value="InterPro"/>
</dbReference>
<dbReference type="GO" id="GO:0051082">
    <property type="term" value="F:unfolded protein binding"/>
    <property type="evidence" value="ECO:0000318"/>
    <property type="project" value="GO_Central"/>
</dbReference>
<dbReference type="GO" id="GO:0034605">
    <property type="term" value="P:cellular response to heat"/>
    <property type="evidence" value="ECO:0000318"/>
    <property type="project" value="GO_Central"/>
</dbReference>
<dbReference type="GO" id="GO:0006457">
    <property type="term" value="P:protein folding"/>
    <property type="evidence" value="ECO:0000318"/>
    <property type="project" value="GO_Central"/>
</dbReference>
<dbReference type="GO" id="GO:0050821">
    <property type="term" value="P:protein stabilization"/>
    <property type="evidence" value="ECO:0000318"/>
    <property type="project" value="GO_Central"/>
</dbReference>
<dbReference type="CDD" id="cd16927">
    <property type="entry name" value="HATPase_Hsp90-like"/>
    <property type="match status" value="1"/>
</dbReference>
<dbReference type="FunFam" id="1.20.120.790:FF:000001">
    <property type="entry name" value="Heat shock protein 90 alpha"/>
    <property type="match status" value="1"/>
</dbReference>
<dbReference type="FunFam" id="3.30.230.80:FF:000001">
    <property type="entry name" value="Heat shock protein 90 alpha"/>
    <property type="match status" value="1"/>
</dbReference>
<dbReference type="FunFam" id="3.40.50.11260:FF:000001">
    <property type="entry name" value="Heat shock protein 90 alpha"/>
    <property type="match status" value="1"/>
</dbReference>
<dbReference type="FunFam" id="3.30.565.10:FF:000001">
    <property type="entry name" value="Heat shock protein HSP 90-alpha"/>
    <property type="match status" value="1"/>
</dbReference>
<dbReference type="Gene3D" id="3.30.230.80">
    <property type="match status" value="1"/>
</dbReference>
<dbReference type="Gene3D" id="3.40.50.11260">
    <property type="match status" value="1"/>
</dbReference>
<dbReference type="Gene3D" id="1.20.120.790">
    <property type="entry name" value="Heat shock protein 90, C-terminal domain"/>
    <property type="match status" value="1"/>
</dbReference>
<dbReference type="Gene3D" id="3.30.565.10">
    <property type="entry name" value="Histidine kinase-like ATPase, C-terminal domain"/>
    <property type="match status" value="1"/>
</dbReference>
<dbReference type="HAMAP" id="MF_00505">
    <property type="entry name" value="HSP90"/>
    <property type="match status" value="1"/>
</dbReference>
<dbReference type="InterPro" id="IPR036890">
    <property type="entry name" value="HATPase_C_sf"/>
</dbReference>
<dbReference type="InterPro" id="IPR019805">
    <property type="entry name" value="Heat_shock_protein_90_CS"/>
</dbReference>
<dbReference type="InterPro" id="IPR037196">
    <property type="entry name" value="HSP90_C"/>
</dbReference>
<dbReference type="InterPro" id="IPR001404">
    <property type="entry name" value="Hsp90_fam"/>
</dbReference>
<dbReference type="InterPro" id="IPR020575">
    <property type="entry name" value="Hsp90_N"/>
</dbReference>
<dbReference type="InterPro" id="IPR020568">
    <property type="entry name" value="Ribosomal_Su5_D2-typ_SF"/>
</dbReference>
<dbReference type="NCBIfam" id="NF003555">
    <property type="entry name" value="PRK05218.1"/>
    <property type="match status" value="1"/>
</dbReference>
<dbReference type="PANTHER" id="PTHR11528">
    <property type="entry name" value="HEAT SHOCK PROTEIN 90 FAMILY MEMBER"/>
    <property type="match status" value="1"/>
</dbReference>
<dbReference type="Pfam" id="PF13589">
    <property type="entry name" value="HATPase_c_3"/>
    <property type="match status" value="1"/>
</dbReference>
<dbReference type="Pfam" id="PF00183">
    <property type="entry name" value="HSP90"/>
    <property type="match status" value="1"/>
</dbReference>
<dbReference type="PIRSF" id="PIRSF002583">
    <property type="entry name" value="Hsp90"/>
    <property type="match status" value="1"/>
</dbReference>
<dbReference type="PRINTS" id="PR00775">
    <property type="entry name" value="HEATSHOCK90"/>
</dbReference>
<dbReference type="SMART" id="SM00387">
    <property type="entry name" value="HATPase_c"/>
    <property type="match status" value="1"/>
</dbReference>
<dbReference type="SUPFAM" id="SSF55874">
    <property type="entry name" value="ATPase domain of HSP90 chaperone/DNA topoisomerase II/histidine kinase"/>
    <property type="match status" value="1"/>
</dbReference>
<dbReference type="SUPFAM" id="SSF110942">
    <property type="entry name" value="HSP90 C-terminal domain"/>
    <property type="match status" value="1"/>
</dbReference>
<dbReference type="SUPFAM" id="SSF54211">
    <property type="entry name" value="Ribosomal protein S5 domain 2-like"/>
    <property type="match status" value="1"/>
</dbReference>
<dbReference type="PROSITE" id="PS00298">
    <property type="entry name" value="HSP90"/>
    <property type="match status" value="1"/>
</dbReference>
<reference key="1">
    <citation type="submission" date="2001-10" db="EMBL/GenBank/DDBJ databases">
        <authorList>
            <person name="Wendland J.W."/>
            <person name="Dietrich F.S."/>
            <person name="Gaffney T.D."/>
            <person name="Philippsen P."/>
        </authorList>
    </citation>
    <scope>NUCLEOTIDE SEQUENCE [GENOMIC DNA]</scope>
</reference>
<reference key="2">
    <citation type="journal article" date="2004" name="Science">
        <title>The Ashbya gossypii genome as a tool for mapping the ancient Saccharomyces cerevisiae genome.</title>
        <authorList>
            <person name="Dietrich F.S."/>
            <person name="Voegeli S."/>
            <person name="Brachat S."/>
            <person name="Lerch A."/>
            <person name="Gates K."/>
            <person name="Steiner S."/>
            <person name="Mohr C."/>
            <person name="Poehlmann R."/>
            <person name="Luedi P."/>
            <person name="Choi S."/>
            <person name="Wing R.A."/>
            <person name="Flavier A."/>
            <person name="Gaffney T.D."/>
            <person name="Philippsen P."/>
        </authorList>
    </citation>
    <scope>NUCLEOTIDE SEQUENCE [LARGE SCALE GENOMIC DNA]</scope>
    <source>
        <strain>ATCC 10895 / CBS 109.51 / FGSC 9923 / NRRL Y-1056</strain>
    </source>
</reference>
<reference key="3">
    <citation type="journal article" date="2013" name="G3 (Bethesda)">
        <title>Genomes of Ashbya fungi isolated from insects reveal four mating-type loci, numerous translocations, lack of transposons, and distinct gene duplications.</title>
        <authorList>
            <person name="Dietrich F.S."/>
            <person name="Voegeli S."/>
            <person name="Kuo S."/>
            <person name="Philippsen P."/>
        </authorList>
    </citation>
    <scope>GENOME REANNOTATION</scope>
    <source>
        <strain>ATCC 10895 / CBS 109.51 / FGSC 9923 / NRRL Y-1056</strain>
    </source>
</reference>
<sequence>MSSQETYEFQAEITQLMSLIINTVYSNKEIFLRELISNASDALDKIRYQSLSDPKVLESDPELFIRLTPKPEEKVLEIRDSGIGMTKAELINNLGTIAKSGTKAFMEALSAGADVSMIGQFGVGFYSLFLVADRVQVISKHNDDEQYIWESNAGGSFTVTLDEVNERIGRGTILRLFLKEDQLEYLEEKRIKEVVKRHSEFVAYPIQLLVTKEVEKEVPVEEEEKKEETEDDKKPKLEEVDEEEEDKEKSKTKKVKENVKELEELNKTKPLWTRNPSEVTQEEYNAFYKSISNDWEDPLAVKHFSVEGQLEFRAILFIPKRAPFDLFESKKKKNNIKLYVRRVFITDEAEELIPEWLSFVKGVVDSEDLPLNLSREMLQQNKIMKVIKKNIVKKLIEAFNEIAEDSEQFEKFYSAFAKNIKLGIHEDSQNRASLAKLLRYNSTKSVDEQTSLADYVTRMPEHQKNVYFITGESIKAVEKSPFLDALKAKNFEVLFLVDPIDEYAFQQLKEFEGKQLVDITKDFELEESEEEKKQREEEIKEFEPLTAALKEVLGDQVEKVVVSYKLIDAPAAIRTGQFGWSANMERIMKAQALRDSTMSSYMASKKIFEISPKSAIIKELKKRVEDNGAQDRTVKDLTSLLYETALLTSGFTLEEPASFATRINRLISLGLNIDEEESTETAAETATEAPVEEVAPETAMEEVD</sequence>
<feature type="chain" id="PRO_0000062956" description="Heat shock protein HSP82">
    <location>
        <begin position="1"/>
        <end position="704"/>
    </location>
</feature>
<feature type="region of interest" description="Disordered" evidence="2">
    <location>
        <begin position="219"/>
        <end position="255"/>
    </location>
</feature>
<feature type="region of interest" description="Disordered" evidence="2">
    <location>
        <begin position="675"/>
        <end position="704"/>
    </location>
</feature>
<feature type="short sequence motif" description="TPR repeat-binding">
    <location>
        <begin position="700"/>
        <end position="704"/>
    </location>
</feature>
<feature type="compositionally biased region" description="Basic and acidic residues" evidence="2">
    <location>
        <begin position="226"/>
        <end position="238"/>
    </location>
</feature>
<feature type="compositionally biased region" description="Low complexity" evidence="2">
    <location>
        <begin position="680"/>
        <end position="689"/>
    </location>
</feature>
<feature type="compositionally biased region" description="Acidic residues" evidence="2">
    <location>
        <begin position="690"/>
        <end position="704"/>
    </location>
</feature>
<feature type="binding site" evidence="1">
    <location>
        <position position="38"/>
    </location>
    <ligand>
        <name>ATP</name>
        <dbReference type="ChEBI" id="CHEBI:30616"/>
    </ligand>
</feature>
<feature type="binding site" evidence="1">
    <location>
        <position position="80"/>
    </location>
    <ligand>
        <name>ATP</name>
        <dbReference type="ChEBI" id="CHEBI:30616"/>
    </ligand>
</feature>
<feature type="binding site" evidence="1">
    <location>
        <position position="99"/>
    </location>
    <ligand>
        <name>ATP</name>
        <dbReference type="ChEBI" id="CHEBI:30616"/>
    </ligand>
</feature>
<feature type="binding site" evidence="1">
    <location>
        <position position="125"/>
    </location>
    <ligand>
        <name>ATP</name>
        <dbReference type="ChEBI" id="CHEBI:30616"/>
    </ligand>
</feature>
<feature type="binding site" evidence="1">
    <location>
        <position position="375"/>
    </location>
    <ligand>
        <name>ATP</name>
        <dbReference type="ChEBI" id="CHEBI:30616"/>
    </ligand>
</feature>
<proteinExistence type="inferred from homology"/>
<protein>
    <recommendedName>
        <fullName>Heat shock protein HSP82</fullName>
    </recommendedName>
</protein>
<gene>
    <name type="primary">HSP82</name>
    <name type="ordered locus">AFL148C</name>
</gene>
<keyword id="KW-0067">ATP-binding</keyword>
<keyword id="KW-0143">Chaperone</keyword>
<keyword id="KW-0963">Cytoplasm</keyword>
<keyword id="KW-0547">Nucleotide-binding</keyword>
<keyword id="KW-1185">Reference proteome</keyword>
<keyword id="KW-0346">Stress response</keyword>
<evidence type="ECO:0000250" key="1"/>
<evidence type="ECO:0000256" key="2">
    <source>
        <dbReference type="SAM" id="MobiDB-lite"/>
    </source>
</evidence>
<evidence type="ECO:0000305" key="3"/>
<accession>Q8J2M3</accession>
<organism>
    <name type="scientific">Eremothecium gossypii (strain ATCC 10895 / CBS 109.51 / FGSC 9923 / NRRL Y-1056)</name>
    <name type="common">Yeast</name>
    <name type="synonym">Ashbya gossypii</name>
    <dbReference type="NCBI Taxonomy" id="284811"/>
    <lineage>
        <taxon>Eukaryota</taxon>
        <taxon>Fungi</taxon>
        <taxon>Dikarya</taxon>
        <taxon>Ascomycota</taxon>
        <taxon>Saccharomycotina</taxon>
        <taxon>Saccharomycetes</taxon>
        <taxon>Saccharomycetales</taxon>
        <taxon>Saccharomycetaceae</taxon>
        <taxon>Eremothecium</taxon>
    </lineage>
</organism>
<name>HSP82_EREGS</name>
<comment type="function">
    <text evidence="1">Molecular chaperone that promotes the maturation, structural maintenance and proper regulation of specific target proteins involved for instance in cell cycle control and signal transduction. Undergoes a functional cycle that is linked to its ATPase activity. This cycle probably induces conformational changes in the client proteins, thereby causing their activation. Interacts dynamically with various co-chaperones that modulate its substrate recognition, ATPase cycle and chaperone function (By similarity).</text>
</comment>
<comment type="subunit">
    <text evidence="1">Homodimer.</text>
</comment>
<comment type="subcellular location">
    <subcellularLocation>
        <location evidence="1">Cytoplasm</location>
    </subcellularLocation>
</comment>
<comment type="domain">
    <text evidence="1">The TPR repeat-binding motif mediates interaction with TPR repeat-containing proteins.</text>
</comment>
<comment type="similarity">
    <text evidence="3">Belongs to the heat shock protein 90 family.</text>
</comment>